<comment type="function">
    <text evidence="1 3">Catalyzes the conversion of monodehydroascorbate to ascorbate, oxidizing NADH in the process. Ascorbate is a major antioxidant against reactive oxygen species (ROS) and nitric oxide (NO) (PubMed:24376554, PubMed:27652777). Can use NADPH as electron donor, but possesses lower activity compared to NADH as electron donor (PubMed:27652777).</text>
</comment>
<comment type="catalytic activity">
    <reaction evidence="1 3">
        <text>2 monodehydro-L-ascorbate radical + NADH + H(+) = 2 L-ascorbate + NAD(+)</text>
        <dbReference type="Rhea" id="RHEA:14581"/>
        <dbReference type="ChEBI" id="CHEBI:15378"/>
        <dbReference type="ChEBI" id="CHEBI:38290"/>
        <dbReference type="ChEBI" id="CHEBI:57540"/>
        <dbReference type="ChEBI" id="CHEBI:57945"/>
        <dbReference type="ChEBI" id="CHEBI:59513"/>
        <dbReference type="EC" id="1.6.5.4"/>
    </reaction>
</comment>
<comment type="cofactor">
    <cofactor evidence="3">
        <name>FAD</name>
        <dbReference type="ChEBI" id="CHEBI:57692"/>
    </cofactor>
</comment>
<comment type="subcellular location">
    <subcellularLocation>
        <location evidence="5">Cytoplasm</location>
    </subcellularLocation>
</comment>
<comment type="induction">
    <text evidence="2">Down-regulated during senescence.</text>
</comment>
<comment type="similarity">
    <text evidence="5">Belongs to the FAD-dependent oxidoreductase family.</text>
</comment>
<dbReference type="EC" id="1.6.5.4" evidence="1 3"/>
<dbReference type="EMBL" id="D85764">
    <property type="protein sequence ID" value="BAA77214.1"/>
    <property type="molecule type" value="mRNA"/>
</dbReference>
<dbReference type="EMBL" id="AP005558">
    <property type="protein sequence ID" value="BAD46251.1"/>
    <property type="molecule type" value="Genomic_DNA"/>
</dbReference>
<dbReference type="EMBL" id="AP008215">
    <property type="protein sequence ID" value="BAF25874.1"/>
    <property type="molecule type" value="Genomic_DNA"/>
</dbReference>
<dbReference type="EMBL" id="AP014965">
    <property type="protein sequence ID" value="BAT09471.1"/>
    <property type="molecule type" value="Genomic_DNA"/>
</dbReference>
<dbReference type="RefSeq" id="XP_015611766.1">
    <property type="nucleotide sequence ID" value="XM_015756280.1"/>
</dbReference>
<dbReference type="PDB" id="5JCI">
    <property type="method" value="X-ray"/>
    <property type="resolution" value="1.70 A"/>
    <property type="chains" value="A=4-435"/>
</dbReference>
<dbReference type="PDB" id="5JCK">
    <property type="method" value="X-ray"/>
    <property type="resolution" value="2.00 A"/>
    <property type="chains" value="A=1-435"/>
</dbReference>
<dbReference type="PDB" id="5JCL">
    <property type="method" value="X-ray"/>
    <property type="resolution" value="1.80 A"/>
    <property type="chains" value="A/B=4-435"/>
</dbReference>
<dbReference type="PDB" id="5JCM">
    <property type="method" value="X-ray"/>
    <property type="resolution" value="1.90 A"/>
    <property type="chains" value="A/B=4-435"/>
</dbReference>
<dbReference type="PDB" id="5JCN">
    <property type="method" value="X-ray"/>
    <property type="resolution" value="2.29 A"/>
    <property type="chains" value="A/B=1-435"/>
</dbReference>
<dbReference type="PDBsum" id="5JCI"/>
<dbReference type="PDBsum" id="5JCK"/>
<dbReference type="PDBsum" id="5JCL"/>
<dbReference type="PDBsum" id="5JCM"/>
<dbReference type="PDBsum" id="5JCN"/>
<dbReference type="SMR" id="Q652L6"/>
<dbReference type="FunCoup" id="Q652L6">
    <property type="interactions" value="2114"/>
</dbReference>
<dbReference type="STRING" id="39947.Q652L6"/>
<dbReference type="PaxDb" id="39947-Q652L6"/>
<dbReference type="EnsemblPlants" id="Os09t0567300-01">
    <property type="protein sequence ID" value="Os09t0567300-01"/>
    <property type="gene ID" value="Os09g0567300"/>
</dbReference>
<dbReference type="Gramene" id="Os09t0567300-01">
    <property type="protein sequence ID" value="Os09t0567300-01"/>
    <property type="gene ID" value="Os09g0567300"/>
</dbReference>
<dbReference type="KEGG" id="dosa:Os09g0567300"/>
<dbReference type="eggNOG" id="KOG1336">
    <property type="taxonomic scope" value="Eukaryota"/>
</dbReference>
<dbReference type="HOGENOM" id="CLU_003291_4_1_1"/>
<dbReference type="InParanoid" id="Q652L6"/>
<dbReference type="OMA" id="PRCTHYG"/>
<dbReference type="OrthoDB" id="432169at2759"/>
<dbReference type="BRENDA" id="1.6.5.4">
    <property type="organism ID" value="8948"/>
</dbReference>
<dbReference type="Proteomes" id="UP000000763">
    <property type="component" value="Chromosome 9"/>
</dbReference>
<dbReference type="Proteomes" id="UP000059680">
    <property type="component" value="Chromosome 9"/>
</dbReference>
<dbReference type="GO" id="GO:0005737">
    <property type="term" value="C:cytoplasm"/>
    <property type="evidence" value="ECO:0000318"/>
    <property type="project" value="GO_Central"/>
</dbReference>
<dbReference type="GO" id="GO:0005782">
    <property type="term" value="C:peroxisomal matrix"/>
    <property type="evidence" value="ECO:0007669"/>
    <property type="project" value="EnsemblPlants"/>
</dbReference>
<dbReference type="GO" id="GO:0016656">
    <property type="term" value="F:monodehydroascorbate reductase (NADH) activity"/>
    <property type="evidence" value="ECO:0000314"/>
    <property type="project" value="UniProtKB"/>
</dbReference>
<dbReference type="GO" id="GO:0003729">
    <property type="term" value="F:mRNA binding"/>
    <property type="evidence" value="ECO:0007669"/>
    <property type="project" value="EnsemblPlants"/>
</dbReference>
<dbReference type="GO" id="GO:0000166">
    <property type="term" value="F:nucleotide binding"/>
    <property type="evidence" value="ECO:0007669"/>
    <property type="project" value="UniProtKB-KW"/>
</dbReference>
<dbReference type="GO" id="GO:0016651">
    <property type="term" value="F:oxidoreductase activity, acting on NAD(P)H"/>
    <property type="evidence" value="ECO:0000318"/>
    <property type="project" value="GO_Central"/>
</dbReference>
<dbReference type="GO" id="GO:0098869">
    <property type="term" value="P:cellular oxidant detoxification"/>
    <property type="evidence" value="ECO:0000314"/>
    <property type="project" value="UniProtKB"/>
</dbReference>
<dbReference type="FunFam" id="3.30.390.30:FF:000013">
    <property type="entry name" value="Monodehydroascorbate reductase 3"/>
    <property type="match status" value="1"/>
</dbReference>
<dbReference type="FunFam" id="3.50.50.60:FF:000155">
    <property type="entry name" value="Monodehydroascorbate reductase 3"/>
    <property type="match status" value="1"/>
</dbReference>
<dbReference type="Gene3D" id="3.30.390.30">
    <property type="match status" value="1"/>
</dbReference>
<dbReference type="Gene3D" id="3.50.50.60">
    <property type="entry name" value="FAD/NAD(P)-binding domain"/>
    <property type="match status" value="2"/>
</dbReference>
<dbReference type="InterPro" id="IPR050446">
    <property type="entry name" value="FAD-oxidoreductase/Apoptosis"/>
</dbReference>
<dbReference type="InterPro" id="IPR036188">
    <property type="entry name" value="FAD/NAD-bd_sf"/>
</dbReference>
<dbReference type="InterPro" id="IPR023753">
    <property type="entry name" value="FAD/NAD-binding_dom"/>
</dbReference>
<dbReference type="InterPro" id="IPR016156">
    <property type="entry name" value="FAD/NAD-linked_Rdtase_dimer_sf"/>
</dbReference>
<dbReference type="InterPro" id="IPR048618">
    <property type="entry name" value="MDHAR3-like_C"/>
</dbReference>
<dbReference type="PANTHER" id="PTHR43557">
    <property type="entry name" value="APOPTOSIS-INDUCING FACTOR 1"/>
    <property type="match status" value="1"/>
</dbReference>
<dbReference type="PANTHER" id="PTHR43557:SF5">
    <property type="entry name" value="MONODEHYDROASCORBATE REDUCTASE 1, PEROXISOMAL"/>
    <property type="match status" value="1"/>
</dbReference>
<dbReference type="Pfam" id="PF21791">
    <property type="entry name" value="MDHAR3-like_C"/>
    <property type="match status" value="1"/>
</dbReference>
<dbReference type="Pfam" id="PF07992">
    <property type="entry name" value="Pyr_redox_2"/>
    <property type="match status" value="1"/>
</dbReference>
<dbReference type="PRINTS" id="PR00368">
    <property type="entry name" value="FADPNR"/>
</dbReference>
<dbReference type="PRINTS" id="PR00411">
    <property type="entry name" value="PNDRDTASEI"/>
</dbReference>
<dbReference type="SUPFAM" id="SSF51905">
    <property type="entry name" value="FAD/NAD(P)-binding domain"/>
    <property type="match status" value="1"/>
</dbReference>
<dbReference type="SUPFAM" id="SSF55424">
    <property type="entry name" value="FAD/NAD-linked reductases, dimerisation (C-terminal) domain"/>
    <property type="match status" value="1"/>
</dbReference>
<evidence type="ECO:0000269" key="1">
    <source>
    </source>
</evidence>
<evidence type="ECO:0000269" key="2">
    <source>
    </source>
</evidence>
<evidence type="ECO:0000269" key="3">
    <source>
    </source>
</evidence>
<evidence type="ECO:0000303" key="4">
    <source>
    </source>
</evidence>
<evidence type="ECO:0000305" key="5"/>
<evidence type="ECO:0000312" key="6">
    <source>
        <dbReference type="EMBL" id="BAD46251.1"/>
    </source>
</evidence>
<evidence type="ECO:0000312" key="7">
    <source>
        <dbReference type="EMBL" id="BAF25874.1"/>
    </source>
</evidence>
<evidence type="ECO:0007744" key="8">
    <source>
        <dbReference type="PDB" id="5JCI"/>
    </source>
</evidence>
<evidence type="ECO:0007744" key="9">
    <source>
        <dbReference type="PDB" id="5JCK"/>
    </source>
</evidence>
<evidence type="ECO:0007744" key="10">
    <source>
        <dbReference type="PDB" id="5JCL"/>
    </source>
</evidence>
<evidence type="ECO:0007744" key="11">
    <source>
        <dbReference type="PDB" id="5JCN"/>
    </source>
</evidence>
<evidence type="ECO:0007829" key="12">
    <source>
        <dbReference type="PDB" id="5JCI"/>
    </source>
</evidence>
<evidence type="ECO:0007829" key="13">
    <source>
        <dbReference type="PDB" id="5JCL"/>
    </source>
</evidence>
<evidence type="ECO:0007829" key="14">
    <source>
        <dbReference type="PDB" id="5JCN"/>
    </source>
</evidence>
<organism>
    <name type="scientific">Oryza sativa subsp. japonica</name>
    <name type="common">Rice</name>
    <dbReference type="NCBI Taxonomy" id="39947"/>
    <lineage>
        <taxon>Eukaryota</taxon>
        <taxon>Viridiplantae</taxon>
        <taxon>Streptophyta</taxon>
        <taxon>Embryophyta</taxon>
        <taxon>Tracheophyta</taxon>
        <taxon>Spermatophyta</taxon>
        <taxon>Magnoliopsida</taxon>
        <taxon>Liliopsida</taxon>
        <taxon>Poales</taxon>
        <taxon>Poaceae</taxon>
        <taxon>BOP clade</taxon>
        <taxon>Oryzoideae</taxon>
        <taxon>Oryzeae</taxon>
        <taxon>Oryzinae</taxon>
        <taxon>Oryza</taxon>
        <taxon>Oryza sativa</taxon>
    </lineage>
</organism>
<keyword id="KW-0002">3D-structure</keyword>
<keyword id="KW-0963">Cytoplasm</keyword>
<keyword id="KW-0274">FAD</keyword>
<keyword id="KW-0285">Flavoprotein</keyword>
<keyword id="KW-0520">NAD</keyword>
<keyword id="KW-0521">NADP</keyword>
<keyword id="KW-0547">Nucleotide-binding</keyword>
<keyword id="KW-0560">Oxidoreductase</keyword>
<keyword id="KW-0676">Redox-active center</keyword>
<keyword id="KW-1185">Reference proteome</keyword>
<accession>Q652L6</accession>
<accession>Q9XFZ3</accession>
<name>MDAR3_ORYSJ</name>
<sequence>MASEKHFKYVILGGGVAAGYAAREFAKQGVKPGELAIISKEAVAPYERPALSKGYLFPQNAARLPGFHVCVGSGGERLLPEWYSEKGIELILSTEIVKADLASKTLTSAVGATFTYEILIIATGSSVIKLSDFGTQGADSNNILYLREVDDADKLVAAIQAKKGGKAVIVGGGYIGLELSAALKINDFDVTMVFPEPWCMPRLFTADIAAFYESYYTNKGVKIVKGTVAVGFDADANGDVTAVNLKNGSVLEADIVVVGVGGRPLTTLFKGQVAEEKGGIKTDAFFETSVPGVYAVGDVATFPMKMYNELRRVEHVDHARKSAEQAVKAIKGKESGESVVEYDYLPYFYSRSFDLGWQFYGDNVGDTILFGDSDPTSAKPKFGSYWIKDGKVLGAFLEGGSPDENKAIAKVAKTQPPVANIEELKKEGLQFASKI</sequence>
<feature type="chain" id="PRO_0000442021" description="Monodehydroascorbate reductase 3, cytosolic">
    <location>
        <begin position="1"/>
        <end position="435"/>
    </location>
</feature>
<feature type="binding site" evidence="3 8">
    <location>
        <begin position="14"/>
        <end position="17"/>
    </location>
    <ligand>
        <name>FAD</name>
        <dbReference type="ChEBI" id="CHEBI:57692"/>
    </ligand>
</feature>
<feature type="binding site" evidence="3 8">
    <location>
        <position position="41"/>
    </location>
    <ligand>
        <name>FAD</name>
        <dbReference type="ChEBI" id="CHEBI:57692"/>
    </ligand>
</feature>
<feature type="binding site" evidence="3 8">
    <location>
        <position position="48"/>
    </location>
    <ligand>
        <name>FAD</name>
        <dbReference type="ChEBI" id="CHEBI:57692"/>
    </ligand>
</feature>
<feature type="binding site" evidence="3 8">
    <location>
        <position position="53"/>
    </location>
    <ligand>
        <name>FAD</name>
        <dbReference type="ChEBI" id="CHEBI:57692"/>
    </ligand>
</feature>
<feature type="binding site" evidence="3 8">
    <location>
        <position position="96"/>
    </location>
    <ligand>
        <name>FAD</name>
        <dbReference type="ChEBI" id="CHEBI:57692"/>
    </ligand>
</feature>
<feature type="binding site" evidence="3 8">
    <location>
        <begin position="147"/>
        <end position="148"/>
    </location>
    <ligand>
        <name>FAD</name>
        <dbReference type="ChEBI" id="CHEBI:57692"/>
    </ligand>
</feature>
<feature type="binding site" evidence="3 9">
    <location>
        <begin position="172"/>
        <end position="178"/>
    </location>
    <ligand>
        <name>NAD(+)</name>
        <dbReference type="ChEBI" id="CHEBI:57540"/>
    </ligand>
</feature>
<feature type="binding site" evidence="3 10">
    <location>
        <begin position="174"/>
        <end position="178"/>
    </location>
    <ligand>
        <name>NADP(+)</name>
        <dbReference type="ChEBI" id="CHEBI:58349"/>
    </ligand>
</feature>
<feature type="binding site" evidence="3 9">
    <location>
        <position position="196"/>
    </location>
    <ligand>
        <name>NAD(+)</name>
        <dbReference type="ChEBI" id="CHEBI:57540"/>
    </ligand>
</feature>
<feature type="binding site" evidence="3 9">
    <location>
        <position position="202"/>
    </location>
    <ligand>
        <name>NAD(+)</name>
        <dbReference type="ChEBI" id="CHEBI:57540"/>
    </ligand>
</feature>
<feature type="binding site" evidence="3 10">
    <location>
        <position position="202"/>
    </location>
    <ligand>
        <name>NADP(+)</name>
        <dbReference type="ChEBI" id="CHEBI:58349"/>
    </ligand>
</feature>
<feature type="binding site" evidence="3 9">
    <location>
        <position position="261"/>
    </location>
    <ligand>
        <name>NAD(+)</name>
        <dbReference type="ChEBI" id="CHEBI:57540"/>
    </ligand>
</feature>
<feature type="binding site" evidence="3 10">
    <location>
        <position position="261"/>
    </location>
    <ligand>
        <name>NADP(+)</name>
        <dbReference type="ChEBI" id="CHEBI:58349"/>
    </ligand>
</feature>
<feature type="binding site" evidence="3 8">
    <location>
        <position position="298"/>
    </location>
    <ligand>
        <name>FAD</name>
        <dbReference type="ChEBI" id="CHEBI:57692"/>
    </ligand>
</feature>
<feature type="binding site" evidence="3 9">
    <location>
        <begin position="314"/>
        <end position="315"/>
    </location>
    <ligand>
        <name>NAD(+)</name>
        <dbReference type="ChEBI" id="CHEBI:57540"/>
    </ligand>
</feature>
<feature type="binding site" evidence="3 10">
    <location>
        <begin position="314"/>
        <end position="315"/>
    </location>
    <ligand>
        <name>NADP(+)</name>
        <dbReference type="ChEBI" id="CHEBI:58349"/>
    </ligand>
</feature>
<feature type="binding site" evidence="3 8">
    <location>
        <position position="316"/>
    </location>
    <ligand>
        <name>FAD</name>
        <dbReference type="ChEBI" id="CHEBI:57692"/>
    </ligand>
</feature>
<feature type="binding site" evidence="3 11">
    <location>
        <position position="320"/>
    </location>
    <ligand>
        <name>L-ascorbate</name>
        <dbReference type="ChEBI" id="CHEBI:38290"/>
    </ligand>
</feature>
<feature type="binding site" evidence="3 8">
    <location>
        <position position="349"/>
    </location>
    <ligand>
        <name>FAD</name>
        <dbReference type="ChEBI" id="CHEBI:57692"/>
    </ligand>
</feature>
<feature type="binding site" evidence="3 9">
    <location>
        <position position="349"/>
    </location>
    <ligand>
        <name>NAD(+)</name>
        <dbReference type="ChEBI" id="CHEBI:57540"/>
    </ligand>
</feature>
<feature type="binding site" evidence="3 10">
    <location>
        <position position="349"/>
    </location>
    <ligand>
        <name>NADP(+)</name>
        <dbReference type="ChEBI" id="CHEBI:58349"/>
    </ligand>
</feature>
<feature type="binding site" evidence="3 11">
    <location>
        <position position="351"/>
    </location>
    <ligand>
        <name>L-ascorbate</name>
        <dbReference type="ChEBI" id="CHEBI:38290"/>
    </ligand>
</feature>
<feature type="mutagenesis site" description="No effect on catalytic activity." evidence="3">
    <original>C</original>
    <variation>A</variation>
    <location>
        <position position="70"/>
    </location>
</feature>
<feature type="mutagenesis site" description="Slight reduction of catalytic activity." evidence="3">
    <original>C</original>
    <variation>S</variation>
    <location>
        <position position="70"/>
    </location>
</feature>
<feature type="mutagenesis site" description="Slight reduction of catalytic activity." evidence="3">
    <original>G</original>
    <variation>N</variation>
    <location>
        <position position="72"/>
    </location>
</feature>
<feature type="mutagenesis site" description="Reduces catalytic activity 2-fold." evidence="3">
    <original>E</original>
    <variation>A</variation>
    <location>
        <position position="196"/>
    </location>
</feature>
<feature type="mutagenesis site" description="Reduces catalytic activity 5-fold." evidence="3">
    <original>R</original>
    <variation>A</variation>
    <location>
        <position position="320"/>
    </location>
</feature>
<feature type="mutagenesis site" description="Abolishes catalytic activity." evidence="3">
    <original>Y</original>
    <variation>A</variation>
    <variation>F</variation>
    <variation>W</variation>
    <location>
        <position position="349"/>
    </location>
</feature>
<feature type="mutagenesis site" description="No effect on catalytic activity." evidence="3">
    <original>R</original>
    <variation>A</variation>
    <location>
        <position position="351"/>
    </location>
</feature>
<feature type="sequence conflict" description="In Ref. 1; BAA77214." evidence="5" ref="1">
    <original>V</original>
    <variation>G</variation>
    <location>
        <position position="257"/>
    </location>
</feature>
<feature type="strand" evidence="12">
    <location>
        <begin position="5"/>
        <end position="12"/>
    </location>
</feature>
<feature type="helix" evidence="12">
    <location>
        <begin position="16"/>
        <end position="27"/>
    </location>
</feature>
<feature type="strand" evidence="12">
    <location>
        <begin position="34"/>
        <end position="38"/>
    </location>
</feature>
<feature type="strand" evidence="12">
    <location>
        <begin position="40"/>
        <end position="43"/>
    </location>
</feature>
<feature type="helix" evidence="12">
    <location>
        <begin position="48"/>
        <end position="52"/>
    </location>
</feature>
<feature type="helix" evidence="12">
    <location>
        <begin position="54"/>
        <end position="56"/>
    </location>
</feature>
<feature type="strand" evidence="12">
    <location>
        <begin position="58"/>
        <end position="60"/>
    </location>
</feature>
<feature type="turn" evidence="12">
    <location>
        <begin position="64"/>
        <end position="67"/>
    </location>
</feature>
<feature type="helix" evidence="12">
    <location>
        <begin position="71"/>
        <end position="73"/>
    </location>
</feature>
<feature type="helix" evidence="12">
    <location>
        <begin position="80"/>
        <end position="85"/>
    </location>
</feature>
<feature type="strand" evidence="12">
    <location>
        <begin position="89"/>
        <end position="91"/>
    </location>
</feature>
<feature type="strand" evidence="12">
    <location>
        <begin position="96"/>
        <end position="100"/>
    </location>
</feature>
<feature type="turn" evidence="12">
    <location>
        <begin position="101"/>
        <end position="104"/>
    </location>
</feature>
<feature type="strand" evidence="12">
    <location>
        <begin position="105"/>
        <end position="108"/>
    </location>
</feature>
<feature type="strand" evidence="14">
    <location>
        <begin position="109"/>
        <end position="111"/>
    </location>
</feature>
<feature type="strand" evidence="12">
    <location>
        <begin position="113"/>
        <end position="121"/>
    </location>
</feature>
<feature type="strand" evidence="12">
    <location>
        <begin position="125"/>
        <end position="127"/>
    </location>
</feature>
<feature type="helix" evidence="12">
    <location>
        <begin position="130"/>
        <end position="133"/>
    </location>
</feature>
<feature type="turn" evidence="12">
    <location>
        <begin position="137"/>
        <end position="139"/>
    </location>
</feature>
<feature type="strand" evidence="12">
    <location>
        <begin position="143"/>
        <end position="145"/>
    </location>
</feature>
<feature type="helix" evidence="12">
    <location>
        <begin position="149"/>
        <end position="161"/>
    </location>
</feature>
<feature type="turn" evidence="12">
    <location>
        <begin position="162"/>
        <end position="164"/>
    </location>
</feature>
<feature type="strand" evidence="12">
    <location>
        <begin position="165"/>
        <end position="170"/>
    </location>
</feature>
<feature type="helix" evidence="12">
    <location>
        <begin position="174"/>
        <end position="185"/>
    </location>
</feature>
<feature type="strand" evidence="12">
    <location>
        <begin position="189"/>
        <end position="200"/>
    </location>
</feature>
<feature type="turn" evidence="12">
    <location>
        <begin position="201"/>
        <end position="203"/>
    </location>
</feature>
<feature type="helix" evidence="12">
    <location>
        <begin position="206"/>
        <end position="218"/>
    </location>
</feature>
<feature type="strand" evidence="12">
    <location>
        <begin position="222"/>
        <end position="226"/>
    </location>
</feature>
<feature type="strand" evidence="12">
    <location>
        <begin position="229"/>
        <end position="234"/>
    </location>
</feature>
<feature type="strand" evidence="12">
    <location>
        <begin position="238"/>
        <end position="245"/>
    </location>
</feature>
<feature type="strand" evidence="12">
    <location>
        <begin position="250"/>
        <end position="252"/>
    </location>
</feature>
<feature type="strand" evidence="12">
    <location>
        <begin position="254"/>
        <end position="258"/>
    </location>
</feature>
<feature type="strand" evidence="12">
    <location>
        <begin position="262"/>
        <end position="264"/>
    </location>
</feature>
<feature type="helix" evidence="12">
    <location>
        <begin position="267"/>
        <end position="269"/>
    </location>
</feature>
<feature type="turn" evidence="12">
    <location>
        <begin position="270"/>
        <end position="272"/>
    </location>
</feature>
<feature type="strand" evidence="12">
    <location>
        <begin position="279"/>
        <end position="281"/>
    </location>
</feature>
<feature type="strand" evidence="12">
    <location>
        <begin position="293"/>
        <end position="295"/>
    </location>
</feature>
<feature type="helix" evidence="12">
    <location>
        <begin position="297"/>
        <end position="299"/>
    </location>
</feature>
<feature type="strand" evidence="12">
    <location>
        <begin position="300"/>
        <end position="304"/>
    </location>
</feature>
<feature type="helix" evidence="12">
    <location>
        <begin position="305"/>
        <end position="307"/>
    </location>
</feature>
<feature type="strand" evidence="12">
    <location>
        <begin position="309"/>
        <end position="311"/>
    </location>
</feature>
<feature type="helix" evidence="12">
    <location>
        <begin position="316"/>
        <end position="335"/>
    </location>
</feature>
<feature type="strand" evidence="12">
    <location>
        <begin position="347"/>
        <end position="352"/>
    </location>
</feature>
<feature type="strand" evidence="12">
    <location>
        <begin position="355"/>
        <end position="361"/>
    </location>
</feature>
<feature type="strand" evidence="12">
    <location>
        <begin position="365"/>
        <end position="372"/>
    </location>
</feature>
<feature type="strand" evidence="13">
    <location>
        <begin position="377"/>
        <end position="379"/>
    </location>
</feature>
<feature type="strand" evidence="12">
    <location>
        <begin position="381"/>
        <end position="388"/>
    </location>
</feature>
<feature type="strand" evidence="12">
    <location>
        <begin position="391"/>
        <end position="399"/>
    </location>
</feature>
<feature type="helix" evidence="12">
    <location>
        <begin position="402"/>
        <end position="414"/>
    </location>
</feature>
<feature type="helix" evidence="12">
    <location>
        <begin position="421"/>
        <end position="426"/>
    </location>
</feature>
<feature type="helix" evidence="12">
    <location>
        <begin position="428"/>
        <end position="434"/>
    </location>
</feature>
<reference key="1">
    <citation type="submission" date="1996-06" db="EMBL/GenBank/DDBJ databases">
        <title>Molecular cloning and characterization of a cDNA encoding monodehydroascorbate reductase from rice.</title>
        <authorList>
            <person name="Kaminaka H."/>
            <person name="Morita S."/>
            <person name="Tokumoto M."/>
            <person name="Masumura T."/>
            <person name="Tanaka K."/>
        </authorList>
    </citation>
    <scope>NUCLEOTIDE SEQUENCE [MRNA]</scope>
    <source>
        <strain>cv. Nipponbare</strain>
    </source>
</reference>
<reference key="2">
    <citation type="journal article" date="2005" name="Nature">
        <title>The map-based sequence of the rice genome.</title>
        <authorList>
            <consortium name="International rice genome sequencing project (IRGSP)"/>
        </authorList>
    </citation>
    <scope>NUCLEOTIDE SEQUENCE [LARGE SCALE GENOMIC DNA]</scope>
    <source>
        <strain>cv. Nipponbare</strain>
    </source>
</reference>
<reference key="3">
    <citation type="journal article" date="2008" name="Nucleic Acids Res.">
        <title>The rice annotation project database (RAP-DB): 2008 update.</title>
        <authorList>
            <consortium name="The rice annotation project (RAP)"/>
        </authorList>
    </citation>
    <scope>GENOME REANNOTATION</scope>
    <source>
        <strain>cv. Nipponbare</strain>
    </source>
</reference>
<reference key="4">
    <citation type="journal article" date="2013" name="Rice">
        <title>Improvement of the Oryza sativa Nipponbare reference genome using next generation sequence and optical map data.</title>
        <authorList>
            <person name="Kawahara Y."/>
            <person name="de la Bastide M."/>
            <person name="Hamilton J.P."/>
            <person name="Kanamori H."/>
            <person name="McCombie W.R."/>
            <person name="Ouyang S."/>
            <person name="Schwartz D.C."/>
            <person name="Tanaka T."/>
            <person name="Wu J."/>
            <person name="Zhou S."/>
            <person name="Childs K.L."/>
            <person name="Davidson R.M."/>
            <person name="Lin H."/>
            <person name="Quesada-Ocampo L."/>
            <person name="Vaillancourt B."/>
            <person name="Sakai H."/>
            <person name="Lee S.S."/>
            <person name="Kim J."/>
            <person name="Numa H."/>
            <person name="Itoh T."/>
            <person name="Buell C.R."/>
            <person name="Matsumoto T."/>
        </authorList>
    </citation>
    <scope>GENOME REANNOTATION</scope>
    <source>
        <strain>cv. Nipponbare</strain>
    </source>
</reference>
<reference key="5">
    <citation type="journal article" date="2013" name="PLoS ONE">
        <title>Nitric oxide in plants: the roles of ascorbate and hemoglobin.</title>
        <authorList>
            <person name="Wang X."/>
            <person name="Hargrove M.S."/>
        </authorList>
    </citation>
    <scope>FUNCTION</scope>
    <scope>CATALYTIC ACTIVITY</scope>
</reference>
<reference key="6">
    <citation type="journal article" date="2015" name="J. Plant Physiol.">
        <title>Transcriptional profile of genes involved in ascorbate glutathione cycle in senescing leaves for an early senescence leaf (esl) rice mutant.</title>
        <authorList>
            <person name="Li Z."/>
            <person name="Su D."/>
            <person name="Lei B."/>
            <person name="Wang F."/>
            <person name="Geng W."/>
            <person name="Pan G."/>
            <person name="Cheng F."/>
        </authorList>
    </citation>
    <scope>INDUCTION</scope>
</reference>
<reference key="7">
    <citation type="journal article" date="2016" name="Sci. Rep.">
        <title>Structure and catalytic mechanism of monodehydroascorbate reductase, MDHAR, from Oryza sativa L. japonica.</title>
        <authorList>
            <person name="Park A.K."/>
            <person name="Kim I.S."/>
            <person name="Do H."/>
            <person name="Jeon B.W."/>
            <person name="Lee C.W."/>
            <person name="Roh S.J."/>
            <person name="Shin S.C."/>
            <person name="Park H."/>
            <person name="Kim Y.S."/>
            <person name="Kim Y.H."/>
            <person name="Yoon H.S."/>
            <person name="Lee J.H."/>
            <person name="Kim H.W."/>
        </authorList>
    </citation>
    <scope>X-RAY CRYSTALLOGRAPHY (1.70 ANGSTROMS) OF 4-435 IN COMPLEX WITH ASCORBATE; FAD; NAD AND NADP</scope>
    <scope>CATALYTIC ACTIVITY</scope>
    <scope>COFACTOR</scope>
    <scope>MUTAGENESIS OF CYS-70; GLY-72; GLU-196; ARG-320; TYR-349 AND ARG-351</scope>
</reference>
<protein>
    <recommendedName>
        <fullName evidence="5">Monodehydroascorbate reductase 3, cytosolic</fullName>
        <shortName evidence="4">OsMDAR3</shortName>
        <shortName evidence="4">OsMDHAR3</shortName>
        <ecNumber evidence="1 3">1.6.5.4</ecNumber>
    </recommendedName>
</protein>
<proteinExistence type="evidence at protein level"/>
<gene>
    <name evidence="4" type="primary">MDAR3</name>
    <name evidence="4" type="synonym">MDHAR3</name>
    <name evidence="7" type="ordered locus">Os09g0567300</name>
    <name evidence="5" type="ordered locus">LOC_Os09g39380</name>
    <name evidence="6" type="ORF">OJ1155_H10.27</name>
</gene>